<reference key="1">
    <citation type="journal article" date="2008" name="J. Mol. Evol.">
        <title>Complete sequence of the Duckweed (Lemna minor) chloroplast genome: structural organization and phylogenetic relationships to other angiosperms.</title>
        <authorList>
            <person name="Mardanov A.V."/>
            <person name="Ravin N.V."/>
            <person name="Kuznetsov B.B."/>
            <person name="Samigullin T.H."/>
            <person name="Antonov A.S."/>
            <person name="Kolganova T.V."/>
            <person name="Skyabin K.G."/>
        </authorList>
    </citation>
    <scope>NUCLEOTIDE SEQUENCE [LARGE SCALE GENOMIC DNA]</scope>
</reference>
<comment type="function">
    <text evidence="1">Produces ATP from ADP in the presence of a proton gradient across the membrane. The alpha chain is a regulatory subunit.</text>
</comment>
<comment type="catalytic activity">
    <reaction evidence="1">
        <text>ATP + H2O + 4 H(+)(in) = ADP + phosphate + 5 H(+)(out)</text>
        <dbReference type="Rhea" id="RHEA:57720"/>
        <dbReference type="ChEBI" id="CHEBI:15377"/>
        <dbReference type="ChEBI" id="CHEBI:15378"/>
        <dbReference type="ChEBI" id="CHEBI:30616"/>
        <dbReference type="ChEBI" id="CHEBI:43474"/>
        <dbReference type="ChEBI" id="CHEBI:456216"/>
        <dbReference type="EC" id="7.1.2.2"/>
    </reaction>
</comment>
<comment type="subunit">
    <text evidence="1">F-type ATPases have 2 components, CF(1) - the catalytic core - and CF(0) - the membrane proton channel. CF(1) has five subunits: alpha(3), beta(3), gamma(1), delta(1), epsilon(1). CF(0) has four main subunits: a, b, b' and c.</text>
</comment>
<comment type="subcellular location">
    <subcellularLocation>
        <location evidence="1">Plastid</location>
        <location evidence="1">Chloroplast thylakoid membrane</location>
        <topology evidence="1">Peripheral membrane protein</topology>
    </subcellularLocation>
</comment>
<comment type="similarity">
    <text evidence="1">Belongs to the ATPase alpha/beta chains family.</text>
</comment>
<accession>A9L981</accession>
<organism>
    <name type="scientific">Lemna minor</name>
    <name type="common">Common duckweed</name>
    <dbReference type="NCBI Taxonomy" id="4472"/>
    <lineage>
        <taxon>Eukaryota</taxon>
        <taxon>Viridiplantae</taxon>
        <taxon>Streptophyta</taxon>
        <taxon>Embryophyta</taxon>
        <taxon>Tracheophyta</taxon>
        <taxon>Spermatophyta</taxon>
        <taxon>Magnoliopsida</taxon>
        <taxon>Liliopsida</taxon>
        <taxon>Araceae</taxon>
        <taxon>Lemnoideae</taxon>
        <taxon>Lemna</taxon>
    </lineage>
</organism>
<keyword id="KW-0066">ATP synthesis</keyword>
<keyword id="KW-0067">ATP-binding</keyword>
<keyword id="KW-0139">CF(1)</keyword>
<keyword id="KW-0150">Chloroplast</keyword>
<keyword id="KW-0375">Hydrogen ion transport</keyword>
<keyword id="KW-0406">Ion transport</keyword>
<keyword id="KW-0472">Membrane</keyword>
<keyword id="KW-0547">Nucleotide-binding</keyword>
<keyword id="KW-0934">Plastid</keyword>
<keyword id="KW-0793">Thylakoid</keyword>
<keyword id="KW-1278">Translocase</keyword>
<keyword id="KW-0813">Transport</keyword>
<proteinExistence type="inferred from homology"/>
<name>ATPA_LEMMI</name>
<geneLocation type="chloroplast"/>
<gene>
    <name evidence="1" type="primary">atpA</name>
</gene>
<feature type="chain" id="PRO_0000339091" description="ATP synthase subunit alpha, chloroplastic">
    <location>
        <begin position="1"/>
        <end position="507"/>
    </location>
</feature>
<feature type="binding site" evidence="1">
    <location>
        <begin position="170"/>
        <end position="177"/>
    </location>
    <ligand>
        <name>ATP</name>
        <dbReference type="ChEBI" id="CHEBI:30616"/>
    </ligand>
</feature>
<feature type="site" description="Required for activity" evidence="1">
    <location>
        <position position="363"/>
    </location>
</feature>
<evidence type="ECO:0000255" key="1">
    <source>
        <dbReference type="HAMAP-Rule" id="MF_01346"/>
    </source>
</evidence>
<sequence length="507" mass="55020">MVTIRADEISSIIRERIEQYTREVKVVNTGTVLQVGDGIARVHGLDKVMAGELVEFEEGTVGIALNLESNNVGVVLMGDGLLIQEGSSVKATGKIAQIPVSDGYLGRVLNALAKPIDGRGEISASESRLIESPAPGIIARRSVYEPLQTGIIAIDAMIPIGRGQRELIIGDRQTGKTAVATDTILNQKGQNVICVYVAIGQKASSVAQVVTALQERGAMDYTIVVAETADSPATLQYLAPYTGAALAEYFMYRKQHTLIIYDDLSKQAQAYRQMSLLLRRPPGREAYPGDVFYLHSRLLERAAKLSNELGEGSMTALPIVETQSGDVSAYIPTNVISITDGQIFLSADLFNAGIRPAINVGISVSRVGSAAQIKAMKQVAGKLKLELAQFAELEAFAQFASDLDKATQNQLARGQRLRELLKQSQSAPLGVDEQIATIFTGANGYLDSLEVGQVRKFLVQLRTYLKKNKPQFQEIISSTKTFTPEAEALLKEAIQEHIELFLQQEQA</sequence>
<dbReference type="EC" id="7.1.2.2" evidence="1"/>
<dbReference type="EMBL" id="DQ400350">
    <property type="protein sequence ID" value="ABD48480.1"/>
    <property type="molecule type" value="Genomic_DNA"/>
</dbReference>
<dbReference type="RefSeq" id="YP_001595493.1">
    <property type="nucleotide sequence ID" value="NC_010109.1"/>
</dbReference>
<dbReference type="SMR" id="A9L981"/>
<dbReference type="GeneID" id="5787608"/>
<dbReference type="GO" id="GO:0009535">
    <property type="term" value="C:chloroplast thylakoid membrane"/>
    <property type="evidence" value="ECO:0007669"/>
    <property type="project" value="UniProtKB-SubCell"/>
</dbReference>
<dbReference type="GO" id="GO:0045259">
    <property type="term" value="C:proton-transporting ATP synthase complex"/>
    <property type="evidence" value="ECO:0007669"/>
    <property type="project" value="UniProtKB-KW"/>
</dbReference>
<dbReference type="GO" id="GO:0043531">
    <property type="term" value="F:ADP binding"/>
    <property type="evidence" value="ECO:0007669"/>
    <property type="project" value="TreeGrafter"/>
</dbReference>
<dbReference type="GO" id="GO:0005524">
    <property type="term" value="F:ATP binding"/>
    <property type="evidence" value="ECO:0007669"/>
    <property type="project" value="UniProtKB-UniRule"/>
</dbReference>
<dbReference type="GO" id="GO:0046933">
    <property type="term" value="F:proton-transporting ATP synthase activity, rotational mechanism"/>
    <property type="evidence" value="ECO:0007669"/>
    <property type="project" value="UniProtKB-UniRule"/>
</dbReference>
<dbReference type="CDD" id="cd18113">
    <property type="entry name" value="ATP-synt_F1_alpha_C"/>
    <property type="match status" value="1"/>
</dbReference>
<dbReference type="CDD" id="cd18116">
    <property type="entry name" value="ATP-synt_F1_alpha_N"/>
    <property type="match status" value="1"/>
</dbReference>
<dbReference type="CDD" id="cd01132">
    <property type="entry name" value="F1-ATPase_alpha_CD"/>
    <property type="match status" value="1"/>
</dbReference>
<dbReference type="FunFam" id="1.20.150.20:FF:000001">
    <property type="entry name" value="ATP synthase subunit alpha"/>
    <property type="match status" value="1"/>
</dbReference>
<dbReference type="FunFam" id="2.40.30.20:FF:000001">
    <property type="entry name" value="ATP synthase subunit alpha"/>
    <property type="match status" value="1"/>
</dbReference>
<dbReference type="FunFam" id="3.40.50.300:FF:000002">
    <property type="entry name" value="ATP synthase subunit alpha"/>
    <property type="match status" value="1"/>
</dbReference>
<dbReference type="Gene3D" id="2.40.30.20">
    <property type="match status" value="1"/>
</dbReference>
<dbReference type="Gene3D" id="1.20.150.20">
    <property type="entry name" value="ATP synthase alpha/beta chain, C-terminal domain"/>
    <property type="match status" value="1"/>
</dbReference>
<dbReference type="Gene3D" id="3.40.50.300">
    <property type="entry name" value="P-loop containing nucleotide triphosphate hydrolases"/>
    <property type="match status" value="1"/>
</dbReference>
<dbReference type="HAMAP" id="MF_01346">
    <property type="entry name" value="ATP_synth_alpha_bact"/>
    <property type="match status" value="1"/>
</dbReference>
<dbReference type="InterPro" id="IPR023366">
    <property type="entry name" value="ATP_synth_asu-like_sf"/>
</dbReference>
<dbReference type="InterPro" id="IPR000793">
    <property type="entry name" value="ATP_synth_asu_C"/>
</dbReference>
<dbReference type="InterPro" id="IPR038376">
    <property type="entry name" value="ATP_synth_asu_C_sf"/>
</dbReference>
<dbReference type="InterPro" id="IPR033732">
    <property type="entry name" value="ATP_synth_F1_a_nt-bd_dom"/>
</dbReference>
<dbReference type="InterPro" id="IPR005294">
    <property type="entry name" value="ATP_synth_F1_asu"/>
</dbReference>
<dbReference type="InterPro" id="IPR020003">
    <property type="entry name" value="ATPase_a/bsu_AS"/>
</dbReference>
<dbReference type="InterPro" id="IPR004100">
    <property type="entry name" value="ATPase_F1/V1/A1_a/bsu_N"/>
</dbReference>
<dbReference type="InterPro" id="IPR036121">
    <property type="entry name" value="ATPase_F1/V1/A1_a/bsu_N_sf"/>
</dbReference>
<dbReference type="InterPro" id="IPR000194">
    <property type="entry name" value="ATPase_F1/V1/A1_a/bsu_nucl-bd"/>
</dbReference>
<dbReference type="InterPro" id="IPR027417">
    <property type="entry name" value="P-loop_NTPase"/>
</dbReference>
<dbReference type="NCBIfam" id="TIGR00962">
    <property type="entry name" value="atpA"/>
    <property type="match status" value="1"/>
</dbReference>
<dbReference type="NCBIfam" id="NF009884">
    <property type="entry name" value="PRK13343.1"/>
    <property type="match status" value="1"/>
</dbReference>
<dbReference type="PANTHER" id="PTHR48082">
    <property type="entry name" value="ATP SYNTHASE SUBUNIT ALPHA, MITOCHONDRIAL"/>
    <property type="match status" value="1"/>
</dbReference>
<dbReference type="PANTHER" id="PTHR48082:SF2">
    <property type="entry name" value="ATP SYNTHASE SUBUNIT ALPHA, MITOCHONDRIAL"/>
    <property type="match status" value="1"/>
</dbReference>
<dbReference type="Pfam" id="PF00006">
    <property type="entry name" value="ATP-synt_ab"/>
    <property type="match status" value="1"/>
</dbReference>
<dbReference type="Pfam" id="PF00306">
    <property type="entry name" value="ATP-synt_ab_C"/>
    <property type="match status" value="1"/>
</dbReference>
<dbReference type="Pfam" id="PF02874">
    <property type="entry name" value="ATP-synt_ab_N"/>
    <property type="match status" value="1"/>
</dbReference>
<dbReference type="PIRSF" id="PIRSF039088">
    <property type="entry name" value="F_ATPase_subunit_alpha"/>
    <property type="match status" value="1"/>
</dbReference>
<dbReference type="SUPFAM" id="SSF47917">
    <property type="entry name" value="C-terminal domain of alpha and beta subunits of F1 ATP synthase"/>
    <property type="match status" value="1"/>
</dbReference>
<dbReference type="SUPFAM" id="SSF50615">
    <property type="entry name" value="N-terminal domain of alpha and beta subunits of F1 ATP synthase"/>
    <property type="match status" value="1"/>
</dbReference>
<dbReference type="SUPFAM" id="SSF52540">
    <property type="entry name" value="P-loop containing nucleoside triphosphate hydrolases"/>
    <property type="match status" value="1"/>
</dbReference>
<dbReference type="PROSITE" id="PS00152">
    <property type="entry name" value="ATPASE_ALPHA_BETA"/>
    <property type="match status" value="1"/>
</dbReference>
<protein>
    <recommendedName>
        <fullName evidence="1">ATP synthase subunit alpha, chloroplastic</fullName>
        <ecNumber evidence="1">7.1.2.2</ecNumber>
    </recommendedName>
    <alternativeName>
        <fullName evidence="1">ATP synthase F1 sector subunit alpha</fullName>
    </alternativeName>
    <alternativeName>
        <fullName evidence="1">F-ATPase subunit alpha</fullName>
    </alternativeName>
</protein>